<name>ACP_BURMS</name>
<protein>
    <recommendedName>
        <fullName evidence="1">Acyl carrier protein</fullName>
        <shortName evidence="1">ACP</shortName>
    </recommendedName>
</protein>
<accession>A1V6C7</accession>
<comment type="function">
    <text evidence="1">Carrier of the growing fatty acid chain in fatty acid biosynthesis.</text>
</comment>
<comment type="pathway">
    <text evidence="1">Lipid metabolism; fatty acid biosynthesis.</text>
</comment>
<comment type="subcellular location">
    <subcellularLocation>
        <location evidence="1">Cytoplasm</location>
    </subcellularLocation>
</comment>
<comment type="PTM">
    <text evidence="1">4'-phosphopantetheine is transferred from CoA to a specific serine of apo-ACP by AcpS. This modification is essential for activity because fatty acids are bound in thioester linkage to the sulfhydryl of the prosthetic group.</text>
</comment>
<comment type="similarity">
    <text evidence="1">Belongs to the acyl carrier protein (ACP) family.</text>
</comment>
<sequence>MDNIEQRVKKIVAEQLGVAEAEIKNEASFVNDLGADSLDTVELVMALEDEFGMEIPDEEAEKITTVQQAIDYARANVKA</sequence>
<organism>
    <name type="scientific">Burkholderia mallei (strain SAVP1)</name>
    <dbReference type="NCBI Taxonomy" id="320388"/>
    <lineage>
        <taxon>Bacteria</taxon>
        <taxon>Pseudomonadati</taxon>
        <taxon>Pseudomonadota</taxon>
        <taxon>Betaproteobacteria</taxon>
        <taxon>Burkholderiales</taxon>
        <taxon>Burkholderiaceae</taxon>
        <taxon>Burkholderia</taxon>
        <taxon>pseudomallei group</taxon>
    </lineage>
</organism>
<keyword id="KW-0963">Cytoplasm</keyword>
<keyword id="KW-0275">Fatty acid biosynthesis</keyword>
<keyword id="KW-0276">Fatty acid metabolism</keyword>
<keyword id="KW-0444">Lipid biosynthesis</keyword>
<keyword id="KW-0443">Lipid metabolism</keyword>
<keyword id="KW-0596">Phosphopantetheine</keyword>
<keyword id="KW-0597">Phosphoprotein</keyword>
<dbReference type="EMBL" id="CP000526">
    <property type="protein sequence ID" value="ABM52507.1"/>
    <property type="molecule type" value="Genomic_DNA"/>
</dbReference>
<dbReference type="RefSeq" id="WP_004197638.1">
    <property type="nucleotide sequence ID" value="NC_008785.1"/>
</dbReference>
<dbReference type="SMR" id="A1V6C7"/>
<dbReference type="GeneID" id="98102461"/>
<dbReference type="KEGG" id="bmv:BMASAVP1_A2476"/>
<dbReference type="HOGENOM" id="CLU_108696_5_1_4"/>
<dbReference type="UniPathway" id="UPA00094"/>
<dbReference type="GO" id="GO:0005829">
    <property type="term" value="C:cytosol"/>
    <property type="evidence" value="ECO:0007669"/>
    <property type="project" value="TreeGrafter"/>
</dbReference>
<dbReference type="GO" id="GO:0016020">
    <property type="term" value="C:membrane"/>
    <property type="evidence" value="ECO:0007669"/>
    <property type="project" value="GOC"/>
</dbReference>
<dbReference type="GO" id="GO:0000035">
    <property type="term" value="F:acyl binding"/>
    <property type="evidence" value="ECO:0007669"/>
    <property type="project" value="TreeGrafter"/>
</dbReference>
<dbReference type="GO" id="GO:0000036">
    <property type="term" value="F:acyl carrier activity"/>
    <property type="evidence" value="ECO:0007669"/>
    <property type="project" value="UniProtKB-UniRule"/>
</dbReference>
<dbReference type="GO" id="GO:0009245">
    <property type="term" value="P:lipid A biosynthetic process"/>
    <property type="evidence" value="ECO:0007669"/>
    <property type="project" value="TreeGrafter"/>
</dbReference>
<dbReference type="FunFam" id="1.10.1200.10:FF:000001">
    <property type="entry name" value="Acyl carrier protein"/>
    <property type="match status" value="1"/>
</dbReference>
<dbReference type="Gene3D" id="1.10.1200.10">
    <property type="entry name" value="ACP-like"/>
    <property type="match status" value="1"/>
</dbReference>
<dbReference type="HAMAP" id="MF_01217">
    <property type="entry name" value="Acyl_carrier"/>
    <property type="match status" value="1"/>
</dbReference>
<dbReference type="InterPro" id="IPR003231">
    <property type="entry name" value="ACP"/>
</dbReference>
<dbReference type="InterPro" id="IPR036736">
    <property type="entry name" value="ACP-like_sf"/>
</dbReference>
<dbReference type="InterPro" id="IPR009081">
    <property type="entry name" value="PP-bd_ACP"/>
</dbReference>
<dbReference type="InterPro" id="IPR006162">
    <property type="entry name" value="Ppantetheine_attach_site"/>
</dbReference>
<dbReference type="NCBIfam" id="TIGR00517">
    <property type="entry name" value="acyl_carrier"/>
    <property type="match status" value="1"/>
</dbReference>
<dbReference type="NCBIfam" id="NF002148">
    <property type="entry name" value="PRK00982.1-2"/>
    <property type="match status" value="1"/>
</dbReference>
<dbReference type="NCBIfam" id="NF002149">
    <property type="entry name" value="PRK00982.1-3"/>
    <property type="match status" value="1"/>
</dbReference>
<dbReference type="NCBIfam" id="NF002150">
    <property type="entry name" value="PRK00982.1-4"/>
    <property type="match status" value="1"/>
</dbReference>
<dbReference type="NCBIfam" id="NF002151">
    <property type="entry name" value="PRK00982.1-5"/>
    <property type="match status" value="1"/>
</dbReference>
<dbReference type="PANTHER" id="PTHR20863">
    <property type="entry name" value="ACYL CARRIER PROTEIN"/>
    <property type="match status" value="1"/>
</dbReference>
<dbReference type="PANTHER" id="PTHR20863:SF76">
    <property type="entry name" value="CARRIER DOMAIN-CONTAINING PROTEIN"/>
    <property type="match status" value="1"/>
</dbReference>
<dbReference type="Pfam" id="PF00550">
    <property type="entry name" value="PP-binding"/>
    <property type="match status" value="1"/>
</dbReference>
<dbReference type="SUPFAM" id="SSF47336">
    <property type="entry name" value="ACP-like"/>
    <property type="match status" value="1"/>
</dbReference>
<dbReference type="PROSITE" id="PS50075">
    <property type="entry name" value="CARRIER"/>
    <property type="match status" value="1"/>
</dbReference>
<dbReference type="PROSITE" id="PS00012">
    <property type="entry name" value="PHOSPHOPANTETHEINE"/>
    <property type="match status" value="1"/>
</dbReference>
<proteinExistence type="inferred from homology"/>
<reference key="1">
    <citation type="journal article" date="2010" name="Genome Biol. Evol.">
        <title>Continuing evolution of Burkholderia mallei through genome reduction and large-scale rearrangements.</title>
        <authorList>
            <person name="Losada L."/>
            <person name="Ronning C.M."/>
            <person name="DeShazer D."/>
            <person name="Woods D."/>
            <person name="Fedorova N."/>
            <person name="Kim H.S."/>
            <person name="Shabalina S.A."/>
            <person name="Pearson T.R."/>
            <person name="Brinkac L."/>
            <person name="Tan P."/>
            <person name="Nandi T."/>
            <person name="Crabtree J."/>
            <person name="Badger J."/>
            <person name="Beckstrom-Sternberg S."/>
            <person name="Saqib M."/>
            <person name="Schutzer S.E."/>
            <person name="Keim P."/>
            <person name="Nierman W.C."/>
        </authorList>
    </citation>
    <scope>NUCLEOTIDE SEQUENCE [LARGE SCALE GENOMIC DNA]</scope>
    <source>
        <strain>SAVP1</strain>
    </source>
</reference>
<feature type="chain" id="PRO_1000066573" description="Acyl carrier protein">
    <location>
        <begin position="1"/>
        <end position="79"/>
    </location>
</feature>
<feature type="domain" description="Carrier" evidence="2">
    <location>
        <begin position="2"/>
        <end position="77"/>
    </location>
</feature>
<feature type="modified residue" description="O-(pantetheine 4'-phosphoryl)serine" evidence="2">
    <location>
        <position position="37"/>
    </location>
</feature>
<evidence type="ECO:0000255" key="1">
    <source>
        <dbReference type="HAMAP-Rule" id="MF_01217"/>
    </source>
</evidence>
<evidence type="ECO:0000255" key="2">
    <source>
        <dbReference type="PROSITE-ProRule" id="PRU00258"/>
    </source>
</evidence>
<gene>
    <name evidence="1" type="primary">acpP</name>
    <name type="ordered locus">BMASAVP1_A2476</name>
</gene>